<comment type="function">
    <text evidence="1">Binds directly to 23S rRNA. Probably involved in E site tRNA release.</text>
</comment>
<comment type="function">
    <text evidence="1">Protein L1 is also a translational repressor protein, it controls the translation of its operon by binding to its mRNA.</text>
</comment>
<comment type="subunit">
    <text evidence="1">Part of the 50S ribosomal subunit.</text>
</comment>
<comment type="similarity">
    <text evidence="1">Belongs to the universal ribosomal protein uL1 family.</text>
</comment>
<name>RL1_METM5</name>
<sequence>MDSEKILNAVKEARTLAKPRNFTQSVDLIVNLKELDLSRPENRLKEQIVLPSGRGKDVAIAVIAKGDLAAQAEEMGLTVIRQEELEELGKNKKTAKKIANAHGFFIAQADMMPLVGKSLGPVLGPRGKMPQPVPGNANLAPLVARFQKTVSINTRDKALFQVYIGHESMSDDELAANAEAILNVVSRKYEKGLYHVKSAFTKLTMGAAAPIEK</sequence>
<gene>
    <name evidence="1" type="primary">rpl1</name>
    <name type="ordered locus">MmarC5_1413</name>
</gene>
<accession>A4FZS7</accession>
<evidence type="ECO:0000255" key="1">
    <source>
        <dbReference type="HAMAP-Rule" id="MF_01318"/>
    </source>
</evidence>
<evidence type="ECO:0000305" key="2"/>
<feature type="chain" id="PRO_1000051910" description="Large ribosomal subunit protein uL1">
    <location>
        <begin position="1"/>
        <end position="213"/>
    </location>
</feature>
<organism>
    <name type="scientific">Methanococcus maripaludis (strain C5 / ATCC BAA-1333)</name>
    <dbReference type="NCBI Taxonomy" id="402880"/>
    <lineage>
        <taxon>Archaea</taxon>
        <taxon>Methanobacteriati</taxon>
        <taxon>Methanobacteriota</taxon>
        <taxon>Methanomada group</taxon>
        <taxon>Methanococci</taxon>
        <taxon>Methanococcales</taxon>
        <taxon>Methanococcaceae</taxon>
        <taxon>Methanococcus</taxon>
    </lineage>
</organism>
<proteinExistence type="inferred from homology"/>
<protein>
    <recommendedName>
        <fullName evidence="1">Large ribosomal subunit protein uL1</fullName>
    </recommendedName>
    <alternativeName>
        <fullName evidence="2">50S ribosomal protein L1</fullName>
    </alternativeName>
</protein>
<reference key="1">
    <citation type="submission" date="2007-03" db="EMBL/GenBank/DDBJ databases">
        <title>Complete sequence of chromosome of Methanococcus maripaludis C5.</title>
        <authorList>
            <consortium name="US DOE Joint Genome Institute"/>
            <person name="Copeland A."/>
            <person name="Lucas S."/>
            <person name="Lapidus A."/>
            <person name="Barry K."/>
            <person name="Glavina del Rio T."/>
            <person name="Dalin E."/>
            <person name="Tice H."/>
            <person name="Pitluck S."/>
            <person name="Chertkov O."/>
            <person name="Brettin T."/>
            <person name="Bruce D."/>
            <person name="Han C."/>
            <person name="Detter J.C."/>
            <person name="Schmutz J."/>
            <person name="Larimer F."/>
            <person name="Land M."/>
            <person name="Hauser L."/>
            <person name="Kyrpides N."/>
            <person name="Mikhailova N."/>
            <person name="Sieprawska-Lupa M."/>
            <person name="Whitman W.B."/>
            <person name="Richardson P."/>
        </authorList>
    </citation>
    <scope>NUCLEOTIDE SEQUENCE [LARGE SCALE GENOMIC DNA]</scope>
    <source>
        <strain>C5 / ATCC BAA-1333</strain>
    </source>
</reference>
<keyword id="KW-0678">Repressor</keyword>
<keyword id="KW-0687">Ribonucleoprotein</keyword>
<keyword id="KW-0689">Ribosomal protein</keyword>
<keyword id="KW-0694">RNA-binding</keyword>
<keyword id="KW-0699">rRNA-binding</keyword>
<keyword id="KW-0810">Translation regulation</keyword>
<keyword id="KW-0820">tRNA-binding</keyword>
<dbReference type="EMBL" id="CP000609">
    <property type="protein sequence ID" value="ABO35711.1"/>
    <property type="molecule type" value="Genomic_DNA"/>
</dbReference>
<dbReference type="RefSeq" id="WP_011869162.1">
    <property type="nucleotide sequence ID" value="NC_009135.1"/>
</dbReference>
<dbReference type="SMR" id="A4FZS7"/>
<dbReference type="STRING" id="402880.MmarC5_1413"/>
<dbReference type="GeneID" id="4928419"/>
<dbReference type="KEGG" id="mmq:MmarC5_1413"/>
<dbReference type="eggNOG" id="arCOG04289">
    <property type="taxonomic scope" value="Archaea"/>
</dbReference>
<dbReference type="HOGENOM" id="CLU_062853_4_0_2"/>
<dbReference type="OrthoDB" id="10382at2157"/>
<dbReference type="Proteomes" id="UP000000253">
    <property type="component" value="Chromosome"/>
</dbReference>
<dbReference type="GO" id="GO:0015934">
    <property type="term" value="C:large ribosomal subunit"/>
    <property type="evidence" value="ECO:0007669"/>
    <property type="project" value="InterPro"/>
</dbReference>
<dbReference type="GO" id="GO:0019843">
    <property type="term" value="F:rRNA binding"/>
    <property type="evidence" value="ECO:0007669"/>
    <property type="project" value="UniProtKB-UniRule"/>
</dbReference>
<dbReference type="GO" id="GO:0003735">
    <property type="term" value="F:structural constituent of ribosome"/>
    <property type="evidence" value="ECO:0007669"/>
    <property type="project" value="InterPro"/>
</dbReference>
<dbReference type="GO" id="GO:0000049">
    <property type="term" value="F:tRNA binding"/>
    <property type="evidence" value="ECO:0007669"/>
    <property type="project" value="UniProtKB-KW"/>
</dbReference>
<dbReference type="GO" id="GO:0006417">
    <property type="term" value="P:regulation of translation"/>
    <property type="evidence" value="ECO:0007669"/>
    <property type="project" value="UniProtKB-KW"/>
</dbReference>
<dbReference type="GO" id="GO:0006412">
    <property type="term" value="P:translation"/>
    <property type="evidence" value="ECO:0007669"/>
    <property type="project" value="UniProtKB-UniRule"/>
</dbReference>
<dbReference type="CDD" id="cd00403">
    <property type="entry name" value="Ribosomal_L1"/>
    <property type="match status" value="1"/>
</dbReference>
<dbReference type="FunFam" id="3.40.50.790:FF:000005">
    <property type="entry name" value="50S ribosomal protein L1"/>
    <property type="match status" value="1"/>
</dbReference>
<dbReference type="Gene3D" id="3.30.190.20">
    <property type="match status" value="1"/>
</dbReference>
<dbReference type="Gene3D" id="3.40.50.790">
    <property type="match status" value="1"/>
</dbReference>
<dbReference type="HAMAP" id="MF_01318_A">
    <property type="entry name" value="Ribosomal_uL1_A"/>
    <property type="match status" value="1"/>
</dbReference>
<dbReference type="InterPro" id="IPR002143">
    <property type="entry name" value="Ribosomal_uL1"/>
</dbReference>
<dbReference type="InterPro" id="IPR023674">
    <property type="entry name" value="Ribosomal_uL1-like"/>
</dbReference>
<dbReference type="InterPro" id="IPR028364">
    <property type="entry name" value="Ribosomal_uL1/biogenesis"/>
</dbReference>
<dbReference type="InterPro" id="IPR016095">
    <property type="entry name" value="Ribosomal_uL1_3-a/b-sand"/>
</dbReference>
<dbReference type="InterPro" id="IPR023669">
    <property type="entry name" value="Ribosomal_uL1_arc"/>
</dbReference>
<dbReference type="InterPro" id="IPR023673">
    <property type="entry name" value="Ribosomal_uL1_CS"/>
</dbReference>
<dbReference type="NCBIfam" id="NF003244">
    <property type="entry name" value="PRK04203.1"/>
    <property type="match status" value="1"/>
</dbReference>
<dbReference type="PANTHER" id="PTHR36427">
    <property type="entry name" value="54S RIBOSOMAL PROTEIN L1, MITOCHONDRIAL"/>
    <property type="match status" value="1"/>
</dbReference>
<dbReference type="PANTHER" id="PTHR36427:SF3">
    <property type="entry name" value="LARGE RIBOSOMAL SUBUNIT PROTEIN UL1M"/>
    <property type="match status" value="1"/>
</dbReference>
<dbReference type="Pfam" id="PF00687">
    <property type="entry name" value="Ribosomal_L1"/>
    <property type="match status" value="1"/>
</dbReference>
<dbReference type="PIRSF" id="PIRSF002155">
    <property type="entry name" value="Ribosomal_L1"/>
    <property type="match status" value="1"/>
</dbReference>
<dbReference type="SUPFAM" id="SSF56808">
    <property type="entry name" value="Ribosomal protein L1"/>
    <property type="match status" value="1"/>
</dbReference>
<dbReference type="PROSITE" id="PS01199">
    <property type="entry name" value="RIBOSOMAL_L1"/>
    <property type="match status" value="1"/>
</dbReference>